<comment type="function">
    <text evidence="1">One of the primary rRNA binding proteins. Required for association of the 30S and 50S subunits to form the 70S ribosome, for tRNA binding and peptide bond formation. It has been suggested to have peptidyltransferase activity; this is somewhat controversial. Makes several contacts with the 16S rRNA in the 70S ribosome.</text>
</comment>
<comment type="subunit">
    <text evidence="1">Part of the 50S ribosomal subunit. Forms a bridge to the 30S subunit in the 70S ribosome.</text>
</comment>
<comment type="similarity">
    <text evidence="1">Belongs to the universal ribosomal protein uL2 family.</text>
</comment>
<sequence length="238" mass="25746">MGKRLISQNRGRGTPTYRAPSHKYKADLRHPRVDENTSLQGEVIDIEHDPARSAPIAKVAFENGEELFLLASEGVAVGNIIECGDDAEVKPGNIVPIGNVPEGFFICNIESKPNDGGKFVRSSGVYATVVTHEPTRTAVSMPSGNIKWLNPKCRAVVGIVAGGGRVDRPWLKAGKKYHKMKTRAAKYPRVSAVAMNPRDHPFGGGAWKHPGKPTTVSRNAPPGRKVGLIAARRTGMKR</sequence>
<protein>
    <recommendedName>
        <fullName evidence="1">Large ribosomal subunit protein uL2</fullName>
    </recommendedName>
    <alternativeName>
        <fullName evidence="3">50S ribosomal protein L2</fullName>
    </alternativeName>
</protein>
<evidence type="ECO:0000255" key="1">
    <source>
        <dbReference type="HAMAP-Rule" id="MF_01320"/>
    </source>
</evidence>
<evidence type="ECO:0000256" key="2">
    <source>
        <dbReference type="SAM" id="MobiDB-lite"/>
    </source>
</evidence>
<evidence type="ECO:0000305" key="3"/>
<reference key="1">
    <citation type="journal article" date="2002" name="J. Mol. Microbiol. Biotechnol.">
        <title>The genome of Methanosarcina mazei: evidence for lateral gene transfer between Bacteria and Archaea.</title>
        <authorList>
            <person name="Deppenmeier U."/>
            <person name="Johann A."/>
            <person name="Hartsch T."/>
            <person name="Merkl R."/>
            <person name="Schmitz R.A."/>
            <person name="Martinez-Arias R."/>
            <person name="Henne A."/>
            <person name="Wiezer A."/>
            <person name="Baeumer S."/>
            <person name="Jacobi C."/>
            <person name="Brueggemann H."/>
            <person name="Lienard T."/>
            <person name="Christmann A."/>
            <person name="Boemecke M."/>
            <person name="Steckel S."/>
            <person name="Bhattacharyya A."/>
            <person name="Lykidis A."/>
            <person name="Overbeek R."/>
            <person name="Klenk H.-P."/>
            <person name="Gunsalus R.P."/>
            <person name="Fritz H.-J."/>
            <person name="Gottschalk G."/>
        </authorList>
    </citation>
    <scope>NUCLEOTIDE SEQUENCE [LARGE SCALE GENOMIC DNA]</scope>
    <source>
        <strain>ATCC BAA-159 / DSM 3647 / Goe1 / Go1 / JCM 11833 / OCM 88</strain>
    </source>
</reference>
<gene>
    <name evidence="1" type="primary">rpl2</name>
    <name type="ordered locus">MM_2127</name>
</gene>
<name>RL2_METMA</name>
<dbReference type="EMBL" id="AE008384">
    <property type="protein sequence ID" value="AAM31823.1"/>
    <property type="molecule type" value="Genomic_DNA"/>
</dbReference>
<dbReference type="RefSeq" id="WP_011034058.1">
    <property type="nucleotide sequence ID" value="NC_003901.1"/>
</dbReference>
<dbReference type="SMR" id="Q8PV47"/>
<dbReference type="KEGG" id="mma:MM_2127"/>
<dbReference type="PATRIC" id="fig|192952.21.peg.2441"/>
<dbReference type="eggNOG" id="arCOG04067">
    <property type="taxonomic scope" value="Archaea"/>
</dbReference>
<dbReference type="HOGENOM" id="CLU_036235_0_3_2"/>
<dbReference type="Proteomes" id="UP000000595">
    <property type="component" value="Chromosome"/>
</dbReference>
<dbReference type="GO" id="GO:0022625">
    <property type="term" value="C:cytosolic large ribosomal subunit"/>
    <property type="evidence" value="ECO:0007669"/>
    <property type="project" value="TreeGrafter"/>
</dbReference>
<dbReference type="GO" id="GO:0019843">
    <property type="term" value="F:rRNA binding"/>
    <property type="evidence" value="ECO:0007669"/>
    <property type="project" value="UniProtKB-UniRule"/>
</dbReference>
<dbReference type="GO" id="GO:0003735">
    <property type="term" value="F:structural constituent of ribosome"/>
    <property type="evidence" value="ECO:0007669"/>
    <property type="project" value="InterPro"/>
</dbReference>
<dbReference type="GO" id="GO:0002181">
    <property type="term" value="P:cytoplasmic translation"/>
    <property type="evidence" value="ECO:0007669"/>
    <property type="project" value="TreeGrafter"/>
</dbReference>
<dbReference type="FunFam" id="2.40.50.140:FF:000020">
    <property type="entry name" value="60S ribosomal protein L2"/>
    <property type="match status" value="1"/>
</dbReference>
<dbReference type="FunFam" id="4.10.950.10:FF:000002">
    <property type="entry name" value="60S ribosomal protein L2"/>
    <property type="match status" value="1"/>
</dbReference>
<dbReference type="FunFam" id="2.30.30.30:FF:000006">
    <property type="entry name" value="60S ribosomal protein L8"/>
    <property type="match status" value="1"/>
</dbReference>
<dbReference type="Gene3D" id="2.30.30.30">
    <property type="match status" value="1"/>
</dbReference>
<dbReference type="Gene3D" id="2.40.50.140">
    <property type="entry name" value="Nucleic acid-binding proteins"/>
    <property type="match status" value="1"/>
</dbReference>
<dbReference type="Gene3D" id="4.10.950.10">
    <property type="entry name" value="Ribosomal protein L2, domain 3"/>
    <property type="match status" value="1"/>
</dbReference>
<dbReference type="HAMAP" id="MF_01320_A">
    <property type="entry name" value="Ribosomal_uL2_A"/>
    <property type="match status" value="1"/>
</dbReference>
<dbReference type="InterPro" id="IPR012340">
    <property type="entry name" value="NA-bd_OB-fold"/>
</dbReference>
<dbReference type="InterPro" id="IPR014722">
    <property type="entry name" value="Rib_uL2_dom2"/>
</dbReference>
<dbReference type="InterPro" id="IPR002171">
    <property type="entry name" value="Ribosomal_uL2"/>
</dbReference>
<dbReference type="InterPro" id="IPR023672">
    <property type="entry name" value="Ribosomal_uL2_arc_euk"/>
</dbReference>
<dbReference type="InterPro" id="IPR022669">
    <property type="entry name" value="Ribosomal_uL2_C"/>
</dbReference>
<dbReference type="InterPro" id="IPR014726">
    <property type="entry name" value="Ribosomal_uL2_dom3"/>
</dbReference>
<dbReference type="InterPro" id="IPR022666">
    <property type="entry name" value="Ribosomal_uL2_RNA-bd_dom"/>
</dbReference>
<dbReference type="InterPro" id="IPR008991">
    <property type="entry name" value="Translation_prot_SH3-like_sf"/>
</dbReference>
<dbReference type="NCBIfam" id="NF007180">
    <property type="entry name" value="PRK09612.1"/>
    <property type="match status" value="1"/>
</dbReference>
<dbReference type="PANTHER" id="PTHR13691:SF16">
    <property type="entry name" value="LARGE RIBOSOMAL SUBUNIT PROTEIN UL2"/>
    <property type="match status" value="1"/>
</dbReference>
<dbReference type="PANTHER" id="PTHR13691">
    <property type="entry name" value="RIBOSOMAL PROTEIN L2"/>
    <property type="match status" value="1"/>
</dbReference>
<dbReference type="Pfam" id="PF00181">
    <property type="entry name" value="Ribosomal_L2"/>
    <property type="match status" value="1"/>
</dbReference>
<dbReference type="Pfam" id="PF03947">
    <property type="entry name" value="Ribosomal_L2_C"/>
    <property type="match status" value="1"/>
</dbReference>
<dbReference type="PIRSF" id="PIRSF002158">
    <property type="entry name" value="Ribosomal_L2"/>
    <property type="match status" value="1"/>
</dbReference>
<dbReference type="SMART" id="SM01383">
    <property type="entry name" value="Ribosomal_L2"/>
    <property type="match status" value="1"/>
</dbReference>
<dbReference type="SMART" id="SM01382">
    <property type="entry name" value="Ribosomal_L2_C"/>
    <property type="match status" value="1"/>
</dbReference>
<dbReference type="SUPFAM" id="SSF50249">
    <property type="entry name" value="Nucleic acid-binding proteins"/>
    <property type="match status" value="1"/>
</dbReference>
<dbReference type="SUPFAM" id="SSF50104">
    <property type="entry name" value="Translation proteins SH3-like domain"/>
    <property type="match status" value="1"/>
</dbReference>
<accession>Q8PV47</accession>
<keyword id="KW-0687">Ribonucleoprotein</keyword>
<keyword id="KW-0689">Ribosomal protein</keyword>
<keyword id="KW-0694">RNA-binding</keyword>
<keyword id="KW-0699">rRNA-binding</keyword>
<proteinExistence type="inferred from homology"/>
<feature type="chain" id="PRO_0000129717" description="Large ribosomal subunit protein uL2">
    <location>
        <begin position="1"/>
        <end position="238"/>
    </location>
</feature>
<feature type="region of interest" description="Disordered" evidence="2">
    <location>
        <begin position="1"/>
        <end position="22"/>
    </location>
</feature>
<feature type="region of interest" description="Disordered" evidence="2">
    <location>
        <begin position="202"/>
        <end position="223"/>
    </location>
</feature>
<feature type="compositionally biased region" description="Polar residues" evidence="2">
    <location>
        <begin position="1"/>
        <end position="11"/>
    </location>
</feature>
<organism>
    <name type="scientific">Methanosarcina mazei (strain ATCC BAA-159 / DSM 3647 / Goe1 / Go1 / JCM 11833 / OCM 88)</name>
    <name type="common">Methanosarcina frisia</name>
    <dbReference type="NCBI Taxonomy" id="192952"/>
    <lineage>
        <taxon>Archaea</taxon>
        <taxon>Methanobacteriati</taxon>
        <taxon>Methanobacteriota</taxon>
        <taxon>Stenosarchaea group</taxon>
        <taxon>Methanomicrobia</taxon>
        <taxon>Methanosarcinales</taxon>
        <taxon>Methanosarcinaceae</taxon>
        <taxon>Methanosarcina</taxon>
    </lineage>
</organism>